<keyword id="KW-0150">Chloroplast</keyword>
<keyword id="KW-0472">Membrane</keyword>
<keyword id="KW-0520">NAD</keyword>
<keyword id="KW-0521">NADP</keyword>
<keyword id="KW-0934">Plastid</keyword>
<keyword id="KW-0618">Plastoquinone</keyword>
<keyword id="KW-0874">Quinone</keyword>
<keyword id="KW-0793">Thylakoid</keyword>
<keyword id="KW-1278">Translocase</keyword>
<keyword id="KW-0813">Transport</keyword>
<reference key="1">
    <citation type="journal article" date="2006" name="BMC Plant Biol.">
        <title>Rapid and accurate pyrosequencing of angiosperm plastid genomes.</title>
        <authorList>
            <person name="Moore M.J."/>
            <person name="Dhingra A."/>
            <person name="Soltis P.S."/>
            <person name="Shaw R."/>
            <person name="Farmerie W.G."/>
            <person name="Folta K.M."/>
            <person name="Soltis D.E."/>
        </authorList>
    </citation>
    <scope>NUCLEOTIDE SEQUENCE [LARGE SCALE GENOMIC DNA]</scope>
</reference>
<evidence type="ECO:0000255" key="1">
    <source>
        <dbReference type="HAMAP-Rule" id="MF_01357"/>
    </source>
</evidence>
<protein>
    <recommendedName>
        <fullName evidence="1">NAD(P)H-quinone oxidoreductase subunit J, chloroplastic</fullName>
        <ecNumber evidence="1">7.1.1.-</ecNumber>
    </recommendedName>
    <alternativeName>
        <fullName>NAD(P)H dehydrogenase subunit J</fullName>
    </alternativeName>
    <alternativeName>
        <fullName evidence="1">NADH-plastoquinone oxidoreductase subunit J</fullName>
    </alternativeName>
</protein>
<geneLocation type="chloroplast"/>
<proteinExistence type="inferred from homology"/>
<comment type="function">
    <text evidence="1">NDH shuttles electrons from NAD(P)H:plastoquinone, via FMN and iron-sulfur (Fe-S) centers, to quinones in the photosynthetic chain and possibly in a chloroplast respiratory chain. The immediate electron acceptor for the enzyme in this species is believed to be plastoquinone. Couples the redox reaction to proton translocation, and thus conserves the redox energy in a proton gradient.</text>
</comment>
<comment type="catalytic activity">
    <reaction evidence="1">
        <text>a plastoquinone + NADH + (n+1) H(+)(in) = a plastoquinol + NAD(+) + n H(+)(out)</text>
        <dbReference type="Rhea" id="RHEA:42608"/>
        <dbReference type="Rhea" id="RHEA-COMP:9561"/>
        <dbReference type="Rhea" id="RHEA-COMP:9562"/>
        <dbReference type="ChEBI" id="CHEBI:15378"/>
        <dbReference type="ChEBI" id="CHEBI:17757"/>
        <dbReference type="ChEBI" id="CHEBI:57540"/>
        <dbReference type="ChEBI" id="CHEBI:57945"/>
        <dbReference type="ChEBI" id="CHEBI:62192"/>
    </reaction>
</comment>
<comment type="catalytic activity">
    <reaction evidence="1">
        <text>a plastoquinone + NADPH + (n+1) H(+)(in) = a plastoquinol + NADP(+) + n H(+)(out)</text>
        <dbReference type="Rhea" id="RHEA:42612"/>
        <dbReference type="Rhea" id="RHEA-COMP:9561"/>
        <dbReference type="Rhea" id="RHEA-COMP:9562"/>
        <dbReference type="ChEBI" id="CHEBI:15378"/>
        <dbReference type="ChEBI" id="CHEBI:17757"/>
        <dbReference type="ChEBI" id="CHEBI:57783"/>
        <dbReference type="ChEBI" id="CHEBI:58349"/>
        <dbReference type="ChEBI" id="CHEBI:62192"/>
    </reaction>
</comment>
<comment type="subunit">
    <text evidence="1">NDH is composed of at least 16 different subunits, 5 of which are encoded in the nucleus.</text>
</comment>
<comment type="subcellular location">
    <subcellularLocation>
        <location evidence="1">Plastid</location>
        <location evidence="1">Chloroplast thylakoid membrane</location>
        <topology evidence="1">Peripheral membrane protein</topology>
        <orientation evidence="1">Stromal side</orientation>
    </subcellularLocation>
</comment>
<comment type="similarity">
    <text evidence="1">Belongs to the complex I 30 kDa subunit family.</text>
</comment>
<accession>Q09FV8</accession>
<feature type="chain" id="PRO_0000358283" description="NAD(P)H-quinone oxidoreductase subunit J, chloroplastic">
    <location>
        <begin position="1"/>
        <end position="158"/>
    </location>
</feature>
<dbReference type="EC" id="7.1.1.-" evidence="1"/>
<dbReference type="EMBL" id="DQ923117">
    <property type="protein sequence ID" value="ABI49866.1"/>
    <property type="molecule type" value="Genomic_DNA"/>
</dbReference>
<dbReference type="RefSeq" id="YP_740653.1">
    <property type="nucleotide sequence ID" value="NC_008336.1"/>
</dbReference>
<dbReference type="SMR" id="Q09FV8"/>
<dbReference type="GeneID" id="4271630"/>
<dbReference type="GO" id="GO:0009535">
    <property type="term" value="C:chloroplast thylakoid membrane"/>
    <property type="evidence" value="ECO:0007669"/>
    <property type="project" value="UniProtKB-SubCell"/>
</dbReference>
<dbReference type="GO" id="GO:0008137">
    <property type="term" value="F:NADH dehydrogenase (ubiquinone) activity"/>
    <property type="evidence" value="ECO:0007669"/>
    <property type="project" value="InterPro"/>
</dbReference>
<dbReference type="GO" id="GO:0048038">
    <property type="term" value="F:quinone binding"/>
    <property type="evidence" value="ECO:0007669"/>
    <property type="project" value="UniProtKB-KW"/>
</dbReference>
<dbReference type="GO" id="GO:0019684">
    <property type="term" value="P:photosynthesis, light reaction"/>
    <property type="evidence" value="ECO:0007669"/>
    <property type="project" value="UniProtKB-UniRule"/>
</dbReference>
<dbReference type="FunFam" id="3.30.460.80:FF:000004">
    <property type="entry name" value="NAD(P)H-quinone oxidoreductase subunit J, chloroplastic"/>
    <property type="match status" value="1"/>
</dbReference>
<dbReference type="Gene3D" id="3.30.460.80">
    <property type="entry name" value="NADH:ubiquinone oxidoreductase, 30kDa subunit"/>
    <property type="match status" value="1"/>
</dbReference>
<dbReference type="HAMAP" id="MF_01357">
    <property type="entry name" value="NDH1_NuoC"/>
    <property type="match status" value="1"/>
</dbReference>
<dbReference type="InterPro" id="IPR010218">
    <property type="entry name" value="NADH_DH_suC"/>
</dbReference>
<dbReference type="InterPro" id="IPR037232">
    <property type="entry name" value="NADH_quin_OxRdtase_su_C/D-like"/>
</dbReference>
<dbReference type="InterPro" id="IPR001268">
    <property type="entry name" value="NADH_UbQ_OxRdtase_30kDa_su"/>
</dbReference>
<dbReference type="InterPro" id="IPR020396">
    <property type="entry name" value="NADH_UbQ_OxRdtase_CS"/>
</dbReference>
<dbReference type="NCBIfam" id="NF009141">
    <property type="entry name" value="PRK12494.1"/>
    <property type="match status" value="1"/>
</dbReference>
<dbReference type="PANTHER" id="PTHR10884:SF14">
    <property type="entry name" value="NADH DEHYDROGENASE [UBIQUINONE] IRON-SULFUR PROTEIN 3, MITOCHONDRIAL"/>
    <property type="match status" value="1"/>
</dbReference>
<dbReference type="PANTHER" id="PTHR10884">
    <property type="entry name" value="NADH DEHYDROGENASE UBIQUINONE IRON-SULFUR PROTEIN 3"/>
    <property type="match status" value="1"/>
</dbReference>
<dbReference type="Pfam" id="PF00329">
    <property type="entry name" value="Complex1_30kDa"/>
    <property type="match status" value="1"/>
</dbReference>
<dbReference type="SUPFAM" id="SSF143243">
    <property type="entry name" value="Nqo5-like"/>
    <property type="match status" value="1"/>
</dbReference>
<dbReference type="PROSITE" id="PS00542">
    <property type="entry name" value="COMPLEX1_30K"/>
    <property type="match status" value="1"/>
</dbReference>
<gene>
    <name evidence="1" type="primary">ndhJ</name>
</gene>
<name>NDHJ_NANDO</name>
<organism>
    <name type="scientific">Nandina domestica</name>
    <name type="common">Heavenly bamboo</name>
    <dbReference type="NCBI Taxonomy" id="41776"/>
    <lineage>
        <taxon>Eukaryota</taxon>
        <taxon>Viridiplantae</taxon>
        <taxon>Streptophyta</taxon>
        <taxon>Embryophyta</taxon>
        <taxon>Tracheophyta</taxon>
        <taxon>Spermatophyta</taxon>
        <taxon>Magnoliopsida</taxon>
        <taxon>Ranunculales</taxon>
        <taxon>Berberidaceae</taxon>
        <taxon>Nandinoideae</taxon>
        <taxon>Nandineae</taxon>
        <taxon>Nandina</taxon>
    </lineage>
</organism>
<sequence>MQGRLSAWLVKHGLVHRSLGFDYQGIETLQIKPEDWHSIAVISYVYGYNYLRSQCAYDVAPGGLLASVYHLTRIQYGVDQPEEVCIKVFAPRRNPRIPSVFWIWKSADFQERESYDMLGISYDNHPRLKRILMPESWIGWPLRKDYIAPNFYEIQDAH</sequence>